<name>ZBED6_HUMAN</name>
<comment type="function">
    <text evidence="1 5">Transcriptional repressor which binds to the consensus sequence 5'-GCTCGC-3', transcription regulation may be tissue-specific (By similarity). Regulates the expression of target genes such as: IGF2, PGAP6/TMEM8, ENHO, and PIANP (By similarity). Acts as a transcriptional repressor of growth factor IGF2, thereby negatively regulating postnatal growth of muscles and internal organs, especially in females (By similarity). Negatively regulates myoblast differentiation and myoblast mitochondrial activity via its regulation of IGF2 transcription (By similarity). Negatively regulates the cell cycle of myoblasts, potentially via transcriptional regulation of the E2F family of transcription factors such as: E2F1 and E2F2 (By similarity). Positively regulates the cell cycle and survival of pancreatic beta cells (PubMed:24043816). Binds to the CDH2 gene and may directly repress CDH2 transcription (By similarity). Probably by controlling CDH2 expression, regulates pancreatic beta cell adhesion, and formation of cell-to-cell junctions between pancreatic beta cells and neural crest stem cells (By similarity). May also play a role in embryonic beta cell differentiation (By similarity). May play a role in insulin sensitivity and glucose clearance (By similarity).</text>
</comment>
<comment type="subcellular location">
    <subcellularLocation>
        <location evidence="5">Nucleus</location>
    </subcellularLocation>
    <subcellularLocation>
        <location evidence="1">Nucleus</location>
        <location evidence="1">Nucleolus</location>
    </subcellularLocation>
    <subcellularLocation>
        <location evidence="5">Cytoplasm</location>
    </subcellularLocation>
    <text evidence="1 5">Located predominantly in the nucleolus but is also dispersed throughout the nucleus (By similarity). Mainly cytoplasmic in insulin- and glucagon-positive islet pancreatic cells, however nuclear localization is evidence in some pancreatic endocrine cells (PubMed:24043816).</text>
</comment>
<comment type="tissue specificity">
    <text evidence="5">Expressed in pancreatic islet cells (at protein level).</text>
</comment>
<comment type="miscellaneous">
    <text evidence="4">Encoded by an exapted DNA transposon located in an intron of the ZC3H11A gene.</text>
</comment>
<dbReference type="EMBL" id="AC114402">
    <property type="status" value="NOT_ANNOTATED_CDS"/>
    <property type="molecule type" value="Genomic_DNA"/>
</dbReference>
<dbReference type="CCDS" id="CCDS55673.1"/>
<dbReference type="RefSeq" id="NP_001167579.1">
    <property type="nucleotide sequence ID" value="NM_001174108.2"/>
</dbReference>
<dbReference type="RefSeq" id="NP_001382824.1">
    <property type="nucleotide sequence ID" value="NM_001395895.1"/>
</dbReference>
<dbReference type="BioGRID" id="1147772">
    <property type="interactions" value="11"/>
</dbReference>
<dbReference type="FunCoup" id="P86452">
    <property type="interactions" value="684"/>
</dbReference>
<dbReference type="IntAct" id="P86452">
    <property type="interactions" value="5"/>
</dbReference>
<dbReference type="STRING" id="9606.ENSP00000447879"/>
<dbReference type="iPTMnet" id="P86452"/>
<dbReference type="PhosphoSitePlus" id="P86452"/>
<dbReference type="BioMuta" id="ZBED6"/>
<dbReference type="DMDM" id="292495573"/>
<dbReference type="jPOST" id="P86452"/>
<dbReference type="MassIVE" id="P86452"/>
<dbReference type="PaxDb" id="9606-ENSP00000447879"/>
<dbReference type="PeptideAtlas" id="P86452"/>
<dbReference type="ProteomicsDB" id="57774"/>
<dbReference type="Antibodypedia" id="77040">
    <property type="antibodies" value="10 antibodies from 7 providers"/>
</dbReference>
<dbReference type="DNASU" id="100381270"/>
<dbReference type="Ensembl" id="ENST00000550078.3">
    <property type="protein sequence ID" value="ENSP00000447879.1"/>
    <property type="gene ID" value="ENSG00000257315.4"/>
</dbReference>
<dbReference type="GeneID" id="100381270"/>
<dbReference type="KEGG" id="hsa:100381270"/>
<dbReference type="MANE-Select" id="ENST00000550078.3">
    <property type="protein sequence ID" value="ENSP00000447879.1"/>
    <property type="RefSeq nucleotide sequence ID" value="NM_001395895.1"/>
    <property type="RefSeq protein sequence ID" value="NP_001382824.1"/>
</dbReference>
<dbReference type="UCSC" id="uc021phs.2">
    <property type="organism name" value="human"/>
</dbReference>
<dbReference type="AGR" id="HGNC:33273"/>
<dbReference type="CTD" id="100381270"/>
<dbReference type="DisGeNET" id="100381270"/>
<dbReference type="GeneCards" id="ZBED6"/>
<dbReference type="HGNC" id="HGNC:33273">
    <property type="gene designation" value="ZBED6"/>
</dbReference>
<dbReference type="HPA" id="ENSG00000257315">
    <property type="expression patterns" value="Low tissue specificity"/>
</dbReference>
<dbReference type="MIM" id="613512">
    <property type="type" value="gene"/>
</dbReference>
<dbReference type="neXtProt" id="NX_P86452"/>
<dbReference type="OpenTargets" id="ENSG00000257315"/>
<dbReference type="PharmGKB" id="PA165752811"/>
<dbReference type="VEuPathDB" id="HostDB:ENSG00000257315"/>
<dbReference type="eggNOG" id="KOG1121">
    <property type="taxonomic scope" value="Eukaryota"/>
</dbReference>
<dbReference type="GeneTree" id="ENSGT00940000163411"/>
<dbReference type="HOGENOM" id="CLU_303823_0_0_1"/>
<dbReference type="InParanoid" id="P86452"/>
<dbReference type="OMA" id="YTWRAIC"/>
<dbReference type="OrthoDB" id="1607513at2759"/>
<dbReference type="PAN-GO" id="P86452">
    <property type="GO annotations" value="2 GO annotations based on evolutionary models"/>
</dbReference>
<dbReference type="PhylomeDB" id="P86452"/>
<dbReference type="TreeFam" id="TF322818"/>
<dbReference type="PathwayCommons" id="P86452"/>
<dbReference type="SignaLink" id="P86452"/>
<dbReference type="BioGRID-ORCS" id="100381270">
    <property type="hits" value="17 hits in 1159 CRISPR screens"/>
</dbReference>
<dbReference type="GeneWiki" id="ZBED6"/>
<dbReference type="Pharos" id="P86452">
    <property type="development level" value="Tdark"/>
</dbReference>
<dbReference type="PRO" id="PR:P86452"/>
<dbReference type="Proteomes" id="UP000005640">
    <property type="component" value="Chromosome 1"/>
</dbReference>
<dbReference type="RNAct" id="P86452">
    <property type="molecule type" value="protein"/>
</dbReference>
<dbReference type="Bgee" id="ENSG00000257315">
    <property type="expression patterns" value="Expressed in adrenal tissue and 107 other cell types or tissues"/>
</dbReference>
<dbReference type="GO" id="GO:0034451">
    <property type="term" value="C:centriolar satellite"/>
    <property type="evidence" value="ECO:0000314"/>
    <property type="project" value="HPA"/>
</dbReference>
<dbReference type="GO" id="GO:0000785">
    <property type="term" value="C:chromatin"/>
    <property type="evidence" value="ECO:0000247"/>
    <property type="project" value="NTNU_SB"/>
</dbReference>
<dbReference type="GO" id="GO:0005737">
    <property type="term" value="C:cytoplasm"/>
    <property type="evidence" value="ECO:0000314"/>
    <property type="project" value="UniProtKB"/>
</dbReference>
<dbReference type="GO" id="GO:0005730">
    <property type="term" value="C:nucleolus"/>
    <property type="evidence" value="ECO:0000250"/>
    <property type="project" value="UniProtKB"/>
</dbReference>
<dbReference type="GO" id="GO:0005654">
    <property type="term" value="C:nucleoplasm"/>
    <property type="evidence" value="ECO:0000314"/>
    <property type="project" value="HPA"/>
</dbReference>
<dbReference type="GO" id="GO:0005634">
    <property type="term" value="C:nucleus"/>
    <property type="evidence" value="ECO:0000314"/>
    <property type="project" value="UniProtKB"/>
</dbReference>
<dbReference type="GO" id="GO:0000981">
    <property type="term" value="F:DNA-binding transcription factor activity, RNA polymerase II-specific"/>
    <property type="evidence" value="ECO:0000247"/>
    <property type="project" value="NTNU_SB"/>
</dbReference>
<dbReference type="GO" id="GO:0001227">
    <property type="term" value="F:DNA-binding transcription repressor activity, RNA polymerase II-specific"/>
    <property type="evidence" value="ECO:0000250"/>
    <property type="project" value="ARUK-UCL"/>
</dbReference>
<dbReference type="GO" id="GO:0046983">
    <property type="term" value="F:protein dimerization activity"/>
    <property type="evidence" value="ECO:0007669"/>
    <property type="project" value="InterPro"/>
</dbReference>
<dbReference type="GO" id="GO:0000976">
    <property type="term" value="F:transcription cis-regulatory region binding"/>
    <property type="evidence" value="ECO:0000250"/>
    <property type="project" value="ARUK-UCL"/>
</dbReference>
<dbReference type="GO" id="GO:0008270">
    <property type="term" value="F:zinc ion binding"/>
    <property type="evidence" value="ECO:0007669"/>
    <property type="project" value="UniProtKB-KW"/>
</dbReference>
<dbReference type="GO" id="GO:0001835">
    <property type="term" value="P:blastocyst hatching"/>
    <property type="evidence" value="ECO:0007669"/>
    <property type="project" value="Ensembl"/>
</dbReference>
<dbReference type="GO" id="GO:0045892">
    <property type="term" value="P:negative regulation of DNA-templated transcription"/>
    <property type="evidence" value="ECO:0000250"/>
    <property type="project" value="UniProtKB"/>
</dbReference>
<dbReference type="GO" id="GO:0051148">
    <property type="term" value="P:negative regulation of muscle cell differentiation"/>
    <property type="evidence" value="ECO:0000250"/>
    <property type="project" value="UniProtKB"/>
</dbReference>
<dbReference type="GO" id="GO:0000122">
    <property type="term" value="P:negative regulation of transcription by RNA polymerase II"/>
    <property type="evidence" value="ECO:0000250"/>
    <property type="project" value="UniProtKB"/>
</dbReference>
<dbReference type="GO" id="GO:0061178">
    <property type="term" value="P:regulation of insulin secretion involved in cellular response to glucose stimulus"/>
    <property type="evidence" value="ECO:0007669"/>
    <property type="project" value="Ensembl"/>
</dbReference>
<dbReference type="GO" id="GO:0006357">
    <property type="term" value="P:regulation of transcription by RNA polymerase II"/>
    <property type="evidence" value="ECO:0000318"/>
    <property type="project" value="GO_Central"/>
</dbReference>
<dbReference type="InterPro" id="IPR008906">
    <property type="entry name" value="HATC_C_dom"/>
</dbReference>
<dbReference type="InterPro" id="IPR012337">
    <property type="entry name" value="RNaseH-like_sf"/>
</dbReference>
<dbReference type="InterPro" id="IPR052865">
    <property type="entry name" value="Zinc_finger_BED"/>
</dbReference>
<dbReference type="InterPro" id="IPR003656">
    <property type="entry name" value="Znf_BED"/>
</dbReference>
<dbReference type="InterPro" id="IPR036236">
    <property type="entry name" value="Znf_C2H2_sf"/>
</dbReference>
<dbReference type="PANTHER" id="PTHR47241">
    <property type="entry name" value="FINGER PROTEIN, PUTATIVE-RELATED"/>
    <property type="match status" value="1"/>
</dbReference>
<dbReference type="PANTHER" id="PTHR47241:SF2">
    <property type="entry name" value="ZINC FINGER BED DOMAIN-CONTAINING PROTEIN 6"/>
    <property type="match status" value="1"/>
</dbReference>
<dbReference type="Pfam" id="PF05699">
    <property type="entry name" value="Dimer_Tnp_hAT"/>
    <property type="match status" value="1"/>
</dbReference>
<dbReference type="Pfam" id="PF02892">
    <property type="entry name" value="zf-BED"/>
    <property type="match status" value="2"/>
</dbReference>
<dbReference type="SMART" id="SM00614">
    <property type="entry name" value="ZnF_BED"/>
    <property type="match status" value="2"/>
</dbReference>
<dbReference type="SUPFAM" id="SSF57667">
    <property type="entry name" value="beta-beta-alpha zinc fingers"/>
    <property type="match status" value="2"/>
</dbReference>
<dbReference type="SUPFAM" id="SSF140996">
    <property type="entry name" value="Hermes dimerisation domain"/>
    <property type="match status" value="1"/>
</dbReference>
<dbReference type="SUPFAM" id="SSF53098">
    <property type="entry name" value="Ribonuclease H-like"/>
    <property type="match status" value="1"/>
</dbReference>
<dbReference type="PROSITE" id="PS50808">
    <property type="entry name" value="ZF_BED"/>
    <property type="match status" value="2"/>
</dbReference>
<evidence type="ECO:0000250" key="1">
    <source>
        <dbReference type="UniProtKB" id="D2EAC2"/>
    </source>
</evidence>
<evidence type="ECO:0000255" key="2">
    <source>
        <dbReference type="PROSITE-ProRule" id="PRU00027"/>
    </source>
</evidence>
<evidence type="ECO:0000256" key="3">
    <source>
        <dbReference type="SAM" id="MobiDB-lite"/>
    </source>
</evidence>
<evidence type="ECO:0000269" key="4">
    <source>
    </source>
</evidence>
<evidence type="ECO:0000269" key="5">
    <source>
    </source>
</evidence>
<evidence type="ECO:0000303" key="6">
    <source>
    </source>
</evidence>
<evidence type="ECO:0000305" key="7"/>
<protein>
    <recommendedName>
        <fullName evidence="6">Zinc finger BED domain-containing protein 6</fullName>
    </recommendedName>
</protein>
<proteinExistence type="evidence at protein level"/>
<accession>P86452</accession>
<gene>
    <name evidence="6" type="primary">ZBED6</name>
</gene>
<sequence>MSVCTLSVPVSSLSPGRRCNTFSDSGILGCVPINSNTDEEDVVEEKMVAEGVNKEAKQPAKKKRKKGLRIKGKRRRKKLILAKKFSKDLGSGRPVADAPALLASNDPEQDEESLFESNIEKQIYLPSTRAKTSIVWHFFHVDPQYTWRAICNLCEKSVSRGKPGSHLGTSTLQRHLQARHSPHWTRANKFGVASGEEDFTLDVSLSPSSGSNGSFEYIPTDPLDDNRMGKKHDKSASDALRAERGRFLIKSNIVKHALIPGTRAKTSAVWNFFYTDPQHISRAVCNICKRSVSRGRPGSHLGTSTLQRHLQATHPIHWAVANKDSGAVANGLDEAETERSDLLSDTLHGEKSTGSQDLTAEDLSDSDSDEPMLEVENRSESPIPVAEQGTLMRAQERETTCCGNPVSSHISQAIIQMIVEDMHPYNYFSTPAFQRFMQIVAPDYRLPSETYFFTKAVPQLYDCVREKIFLTLENVQSQKIHLTVDIWTHDPSTDYFIVTVHWVSLETASFLNNGRIPDFRKWAVLCVTGLAKDCLITNILQELNDQIGLWLSPNFLIPSFIVSDNSSNVVHAIKDGGFTHVPCFLHCLNMVIQDFFCEHKSIENMLVAARKTCHHFSHSVKARQILQEFQNDHQLPWKNLKQDETGHWISTFYMLKWLLEHCYSVHHSLGRASGVVLTSLQWTLMTYVCDILKPFEEATQKVSVKTAGLNQVLPLIHHLLLSLQKLREDFQVRGITQALNLVDSLSLKLETDTLLSAMLKSKPCILATLLDPCFKNSLEDFFPQGADLETYKQFLAEEVCNYMESSPEICQIPTSEASCPSVTVGADSFTSSLKEGTSSSGSVDSSAVDNVALGSKSFMFPSAVAVVDEYFKEKYSEFSGGDDPLIYWQRKISIWPALTQVAIQYLSCPMCSWQSECIFTKNSHFHPKQIMSLDFDNIEQLMFLKMNLKNVNYDYSTLVLSWDPEQNEVVQSSEKEILP</sequence>
<keyword id="KW-0963">Cytoplasm</keyword>
<keyword id="KW-0238">DNA-binding</keyword>
<keyword id="KW-0479">Metal-binding</keyword>
<keyword id="KW-0539">Nucleus</keyword>
<keyword id="KW-0597">Phosphoprotein</keyword>
<keyword id="KW-1267">Proteomics identification</keyword>
<keyword id="KW-1185">Reference proteome</keyword>
<keyword id="KW-0677">Repeat</keyword>
<keyword id="KW-0678">Repressor</keyword>
<keyword id="KW-0804">Transcription</keyword>
<keyword id="KW-0805">Transcription regulation</keyword>
<keyword id="KW-0862">Zinc</keyword>
<keyword id="KW-0863">Zinc-finger</keyword>
<organism>
    <name type="scientific">Homo sapiens</name>
    <name type="common">Human</name>
    <dbReference type="NCBI Taxonomy" id="9606"/>
    <lineage>
        <taxon>Eukaryota</taxon>
        <taxon>Metazoa</taxon>
        <taxon>Chordata</taxon>
        <taxon>Craniata</taxon>
        <taxon>Vertebrata</taxon>
        <taxon>Euteleostomi</taxon>
        <taxon>Mammalia</taxon>
        <taxon>Eutheria</taxon>
        <taxon>Euarchontoglires</taxon>
        <taxon>Primates</taxon>
        <taxon>Haplorrhini</taxon>
        <taxon>Catarrhini</taxon>
        <taxon>Hominidae</taxon>
        <taxon>Homo</taxon>
    </lineage>
</organism>
<feature type="chain" id="PRO_0000392573" description="Zinc finger BED domain-containing protein 6">
    <location>
        <begin position="1"/>
        <end position="979"/>
    </location>
</feature>
<feature type="zinc finger region" description="BED-type 1" evidence="2">
    <location>
        <begin position="130"/>
        <end position="187"/>
    </location>
</feature>
<feature type="zinc finger region" description="BED-type 2" evidence="2">
    <location>
        <begin position="264"/>
        <end position="321"/>
    </location>
</feature>
<feature type="region of interest" description="Required for nucleolar localization" evidence="1">
    <location>
        <begin position="1"/>
        <end position="89"/>
    </location>
</feature>
<feature type="region of interest" description="Disordered" evidence="3">
    <location>
        <begin position="207"/>
        <end position="232"/>
    </location>
</feature>
<feature type="region of interest" description="Disordered" evidence="3">
    <location>
        <begin position="333"/>
        <end position="383"/>
    </location>
</feature>
<feature type="region of interest" description="HATC (Hobo-Ac-Tam3) domain">
    <location>
        <begin position="866"/>
        <end position="948"/>
    </location>
</feature>
<feature type="compositionally biased region" description="Basic and acidic residues" evidence="3">
    <location>
        <begin position="337"/>
        <end position="351"/>
    </location>
</feature>
<feature type="compositionally biased region" description="Acidic residues" evidence="3">
    <location>
        <begin position="359"/>
        <end position="373"/>
    </location>
</feature>
<feature type="binding site" evidence="2">
    <location>
        <position position="151"/>
    </location>
    <ligand>
        <name>Zn(2+)</name>
        <dbReference type="ChEBI" id="CHEBI:29105"/>
        <label>1</label>
    </ligand>
</feature>
<feature type="binding site" evidence="2">
    <location>
        <position position="154"/>
    </location>
    <ligand>
        <name>Zn(2+)</name>
        <dbReference type="ChEBI" id="CHEBI:29105"/>
        <label>1</label>
    </ligand>
</feature>
<feature type="binding site" evidence="2">
    <location>
        <position position="175"/>
    </location>
    <ligand>
        <name>Zn(2+)</name>
        <dbReference type="ChEBI" id="CHEBI:29105"/>
        <label>1</label>
    </ligand>
</feature>
<feature type="binding site" evidence="2">
    <location>
        <position position="180"/>
    </location>
    <ligand>
        <name>Zn(2+)</name>
        <dbReference type="ChEBI" id="CHEBI:29105"/>
        <label>1</label>
    </ligand>
</feature>
<feature type="binding site" evidence="2">
    <location>
        <position position="285"/>
    </location>
    <ligand>
        <name>Zn(2+)</name>
        <dbReference type="ChEBI" id="CHEBI:29105"/>
        <label>2</label>
    </ligand>
</feature>
<feature type="binding site" evidence="2">
    <location>
        <position position="288"/>
    </location>
    <ligand>
        <name>Zn(2+)</name>
        <dbReference type="ChEBI" id="CHEBI:29105"/>
        <label>2</label>
    </ligand>
</feature>
<feature type="binding site" evidence="2">
    <location>
        <position position="309"/>
    </location>
    <ligand>
        <name>Zn(2+)</name>
        <dbReference type="ChEBI" id="CHEBI:29105"/>
        <label>2</label>
    </ligand>
</feature>
<feature type="binding site" evidence="2">
    <location>
        <position position="314"/>
    </location>
    <ligand>
        <name>Zn(2+)</name>
        <dbReference type="ChEBI" id="CHEBI:29105"/>
        <label>2</label>
    </ligand>
</feature>
<feature type="modified residue" description="Phosphoserine" evidence="1">
    <location>
        <position position="381"/>
    </location>
</feature>
<reference evidence="7" key="1">
    <citation type="journal article" date="2006" name="Nature">
        <title>The DNA sequence and biological annotation of human chromosome 1.</title>
        <authorList>
            <person name="Gregory S.G."/>
            <person name="Barlow K.F."/>
            <person name="McLay K.E."/>
            <person name="Kaul R."/>
            <person name="Swarbreck D."/>
            <person name="Dunham A."/>
            <person name="Scott C.E."/>
            <person name="Howe K.L."/>
            <person name="Woodfine K."/>
            <person name="Spencer C.C.A."/>
            <person name="Jones M.C."/>
            <person name="Gillson C."/>
            <person name="Searle S."/>
            <person name="Zhou Y."/>
            <person name="Kokocinski F."/>
            <person name="McDonald L."/>
            <person name="Evans R."/>
            <person name="Phillips K."/>
            <person name="Atkinson A."/>
            <person name="Cooper R."/>
            <person name="Jones C."/>
            <person name="Hall R.E."/>
            <person name="Andrews T.D."/>
            <person name="Lloyd C."/>
            <person name="Ainscough R."/>
            <person name="Almeida J.P."/>
            <person name="Ambrose K.D."/>
            <person name="Anderson F."/>
            <person name="Andrew R.W."/>
            <person name="Ashwell R.I.S."/>
            <person name="Aubin K."/>
            <person name="Babbage A.K."/>
            <person name="Bagguley C.L."/>
            <person name="Bailey J."/>
            <person name="Beasley H."/>
            <person name="Bethel G."/>
            <person name="Bird C.P."/>
            <person name="Bray-Allen S."/>
            <person name="Brown J.Y."/>
            <person name="Brown A.J."/>
            <person name="Buckley D."/>
            <person name="Burton J."/>
            <person name="Bye J."/>
            <person name="Carder C."/>
            <person name="Chapman J.C."/>
            <person name="Clark S.Y."/>
            <person name="Clarke G."/>
            <person name="Clee C."/>
            <person name="Cobley V."/>
            <person name="Collier R.E."/>
            <person name="Corby N."/>
            <person name="Coville G.J."/>
            <person name="Davies J."/>
            <person name="Deadman R."/>
            <person name="Dunn M."/>
            <person name="Earthrowl M."/>
            <person name="Ellington A.G."/>
            <person name="Errington H."/>
            <person name="Frankish A."/>
            <person name="Frankland J."/>
            <person name="French L."/>
            <person name="Garner P."/>
            <person name="Garnett J."/>
            <person name="Gay L."/>
            <person name="Ghori M.R.J."/>
            <person name="Gibson R."/>
            <person name="Gilby L.M."/>
            <person name="Gillett W."/>
            <person name="Glithero R.J."/>
            <person name="Grafham D.V."/>
            <person name="Griffiths C."/>
            <person name="Griffiths-Jones S."/>
            <person name="Grocock R."/>
            <person name="Hammond S."/>
            <person name="Harrison E.S.I."/>
            <person name="Hart E."/>
            <person name="Haugen E."/>
            <person name="Heath P.D."/>
            <person name="Holmes S."/>
            <person name="Holt K."/>
            <person name="Howden P.J."/>
            <person name="Hunt A.R."/>
            <person name="Hunt S.E."/>
            <person name="Hunter G."/>
            <person name="Isherwood J."/>
            <person name="James R."/>
            <person name="Johnson C."/>
            <person name="Johnson D."/>
            <person name="Joy A."/>
            <person name="Kay M."/>
            <person name="Kershaw J.K."/>
            <person name="Kibukawa M."/>
            <person name="Kimberley A.M."/>
            <person name="King A."/>
            <person name="Knights A.J."/>
            <person name="Lad H."/>
            <person name="Laird G."/>
            <person name="Lawlor S."/>
            <person name="Leongamornlert D.A."/>
            <person name="Lloyd D.M."/>
            <person name="Loveland J."/>
            <person name="Lovell J."/>
            <person name="Lush M.J."/>
            <person name="Lyne R."/>
            <person name="Martin S."/>
            <person name="Mashreghi-Mohammadi M."/>
            <person name="Matthews L."/>
            <person name="Matthews N.S.W."/>
            <person name="McLaren S."/>
            <person name="Milne S."/>
            <person name="Mistry S."/>
            <person name="Moore M.J.F."/>
            <person name="Nickerson T."/>
            <person name="O'Dell C.N."/>
            <person name="Oliver K."/>
            <person name="Palmeiri A."/>
            <person name="Palmer S.A."/>
            <person name="Parker A."/>
            <person name="Patel D."/>
            <person name="Pearce A.V."/>
            <person name="Peck A.I."/>
            <person name="Pelan S."/>
            <person name="Phelps K."/>
            <person name="Phillimore B.J."/>
            <person name="Plumb R."/>
            <person name="Rajan J."/>
            <person name="Raymond C."/>
            <person name="Rouse G."/>
            <person name="Saenphimmachak C."/>
            <person name="Sehra H.K."/>
            <person name="Sheridan E."/>
            <person name="Shownkeen R."/>
            <person name="Sims S."/>
            <person name="Skuce C.D."/>
            <person name="Smith M."/>
            <person name="Steward C."/>
            <person name="Subramanian S."/>
            <person name="Sycamore N."/>
            <person name="Tracey A."/>
            <person name="Tromans A."/>
            <person name="Van Helmond Z."/>
            <person name="Wall M."/>
            <person name="Wallis J.M."/>
            <person name="White S."/>
            <person name="Whitehead S.L."/>
            <person name="Wilkinson J.E."/>
            <person name="Willey D.L."/>
            <person name="Williams H."/>
            <person name="Wilming L."/>
            <person name="Wray P.W."/>
            <person name="Wu Z."/>
            <person name="Coulson A."/>
            <person name="Vaudin M."/>
            <person name="Sulston J.E."/>
            <person name="Durbin R.M."/>
            <person name="Hubbard T."/>
            <person name="Wooster R."/>
            <person name="Dunham I."/>
            <person name="Carter N.P."/>
            <person name="McVean G."/>
            <person name="Ross M.T."/>
            <person name="Harrow J."/>
            <person name="Olson M.V."/>
            <person name="Beck S."/>
            <person name="Rogers J."/>
            <person name="Bentley D.R."/>
        </authorList>
    </citation>
    <scope>NUCLEOTIDE SEQUENCE [LARGE SCALE GENOMIC DNA]</scope>
</reference>
<reference evidence="7" key="2">
    <citation type="journal article" date="2009" name="PLoS Biol.">
        <title>ZBED6, a novel transcription factor derived from a domesticated DNA transposon regulates IGF2 expression and muscle growth.</title>
        <authorList>
            <person name="Markljung E."/>
            <person name="Jiang L."/>
            <person name="Jaffe J.D."/>
            <person name="Mikkelsen T.S."/>
            <person name="Wallerman O."/>
            <person name="Larhammar M."/>
            <person name="Zhang X."/>
            <person name="Wang L."/>
            <person name="Saenz-Vash V."/>
            <person name="Gnirke A."/>
            <person name="Lindroth A.M."/>
            <person name="Barres R."/>
            <person name="Yan J."/>
            <person name="Stromberg S."/>
            <person name="De S."/>
            <person name="Ponten F."/>
            <person name="Lander E.S."/>
            <person name="Carr S.A."/>
            <person name="Zierath J.R."/>
            <person name="Kullander K."/>
            <person name="Wadelius C."/>
            <person name="Lindblad-Toh K."/>
            <person name="Andersson G."/>
            <person name="Hjalm G."/>
            <person name="Andersson L."/>
        </authorList>
    </citation>
    <scope>IDENTIFICATION</scope>
</reference>
<reference key="3">
    <citation type="journal article" date="2013" name="Proc. Natl. Acad. Sci. U.S.A.">
        <title>Transcription factor ZBED6 affects gene expression, proliferation, and cell death in pancreatic beta cells.</title>
        <authorList>
            <person name="Wang X."/>
            <person name="Jiang L."/>
            <person name="Wallerman O."/>
            <person name="Engstroem U."/>
            <person name="Ameur A."/>
            <person name="Gupta R.K."/>
            <person name="Qi Y."/>
            <person name="Andersson L."/>
            <person name="Welsh N."/>
        </authorList>
    </citation>
    <scope>FUNCTION</scope>
    <scope>SUBCELLULAR LOCATION</scope>
    <scope>TISSUE SPECIFICITY</scope>
</reference>